<accession>Q47BS0</accession>
<name>DER_DECAR</name>
<organism>
    <name type="scientific">Dechloromonas aromatica (strain RCB)</name>
    <dbReference type="NCBI Taxonomy" id="159087"/>
    <lineage>
        <taxon>Bacteria</taxon>
        <taxon>Pseudomonadati</taxon>
        <taxon>Pseudomonadota</taxon>
        <taxon>Betaproteobacteria</taxon>
        <taxon>Rhodocyclales</taxon>
        <taxon>Azonexaceae</taxon>
        <taxon>Dechloromonas</taxon>
    </lineage>
</organism>
<keyword id="KW-0342">GTP-binding</keyword>
<keyword id="KW-0547">Nucleotide-binding</keyword>
<keyword id="KW-0677">Repeat</keyword>
<keyword id="KW-0690">Ribosome biogenesis</keyword>
<feature type="chain" id="PRO_1000011614" description="GTPase Der">
    <location>
        <begin position="1"/>
        <end position="443"/>
    </location>
</feature>
<feature type="domain" description="EngA-type G 1">
    <location>
        <begin position="3"/>
        <end position="167"/>
    </location>
</feature>
<feature type="domain" description="EngA-type G 2">
    <location>
        <begin position="176"/>
        <end position="349"/>
    </location>
</feature>
<feature type="domain" description="KH-like" evidence="1">
    <location>
        <begin position="350"/>
        <end position="434"/>
    </location>
</feature>
<feature type="binding site" evidence="1">
    <location>
        <begin position="9"/>
        <end position="16"/>
    </location>
    <ligand>
        <name>GTP</name>
        <dbReference type="ChEBI" id="CHEBI:37565"/>
        <label>1</label>
    </ligand>
</feature>
<feature type="binding site" evidence="1">
    <location>
        <begin position="56"/>
        <end position="60"/>
    </location>
    <ligand>
        <name>GTP</name>
        <dbReference type="ChEBI" id="CHEBI:37565"/>
        <label>1</label>
    </ligand>
</feature>
<feature type="binding site" evidence="1">
    <location>
        <begin position="119"/>
        <end position="122"/>
    </location>
    <ligand>
        <name>GTP</name>
        <dbReference type="ChEBI" id="CHEBI:37565"/>
        <label>1</label>
    </ligand>
</feature>
<feature type="binding site" evidence="1">
    <location>
        <begin position="182"/>
        <end position="189"/>
    </location>
    <ligand>
        <name>GTP</name>
        <dbReference type="ChEBI" id="CHEBI:37565"/>
        <label>2</label>
    </ligand>
</feature>
<feature type="binding site" evidence="1">
    <location>
        <begin position="229"/>
        <end position="233"/>
    </location>
    <ligand>
        <name>GTP</name>
        <dbReference type="ChEBI" id="CHEBI:37565"/>
        <label>2</label>
    </ligand>
</feature>
<feature type="binding site" evidence="1">
    <location>
        <begin position="294"/>
        <end position="297"/>
    </location>
    <ligand>
        <name>GTP</name>
        <dbReference type="ChEBI" id="CHEBI:37565"/>
        <label>2</label>
    </ligand>
</feature>
<gene>
    <name evidence="1" type="primary">der</name>
    <name type="synonym">engA</name>
    <name type="ordered locus">Daro_2981</name>
</gene>
<reference key="1">
    <citation type="journal article" date="2009" name="BMC Genomics">
        <title>Metabolic analysis of the soil microbe Dechloromonas aromatica str. RCB: indications of a surprisingly complex life-style and cryptic anaerobic pathways for aromatic degradation.</title>
        <authorList>
            <person name="Salinero K.K."/>
            <person name="Keller K."/>
            <person name="Feil W.S."/>
            <person name="Feil H."/>
            <person name="Trong S."/>
            <person name="Di Bartolo G."/>
            <person name="Lapidus A."/>
        </authorList>
    </citation>
    <scope>NUCLEOTIDE SEQUENCE [LARGE SCALE GENOMIC DNA]</scope>
    <source>
        <strain>RCB</strain>
    </source>
</reference>
<sequence length="443" mass="49074">MKPTLVLVGRPNVGKSTLFNRLTKSRDAIVADMPGLTRDRHYGHGKLGKKPYLVVDTGGFEPLVKEGILHEMARQTEQAIAEADAIIFVVDGRSGLTPHDKEIANKLRRIDRPVFVAVNKAEGMNSGMVEAEFHELGLGEPNAISAAHGEGIRGLVEMALESFPEPEEDEWHSDSVRVAIVGRPNVGKSTLINTLLGEERVIAFDAPGTTRDSIEIDFERGGRKYVLVDTAGMRKRGKVFESIEKFSVVKTLQSIEDANVVILMVDAQADVSDQDAHIADFILQSGRALVVAVNKWDGLDAYTREQTRQILQRKLKFLDFAKFHFISARDNIGLGNMFRSVDSAYAAAMAKMTTPRLTRVLIDAVAKQAPAKHGLFRPKPRYAHQGGSNPPIIVVHGNAVDQVTDSYRRYLEHTFREAFKLQGTPLRIQFVTAKNPFADKDKK</sequence>
<proteinExistence type="inferred from homology"/>
<dbReference type="EMBL" id="CP000089">
    <property type="protein sequence ID" value="AAZ47711.1"/>
    <property type="molecule type" value="Genomic_DNA"/>
</dbReference>
<dbReference type="SMR" id="Q47BS0"/>
<dbReference type="STRING" id="159087.Daro_2981"/>
<dbReference type="KEGG" id="dar:Daro_2981"/>
<dbReference type="eggNOG" id="COG1160">
    <property type="taxonomic scope" value="Bacteria"/>
</dbReference>
<dbReference type="HOGENOM" id="CLU_016077_6_2_4"/>
<dbReference type="OrthoDB" id="9805918at2"/>
<dbReference type="GO" id="GO:0005525">
    <property type="term" value="F:GTP binding"/>
    <property type="evidence" value="ECO:0007669"/>
    <property type="project" value="UniProtKB-UniRule"/>
</dbReference>
<dbReference type="GO" id="GO:0043022">
    <property type="term" value="F:ribosome binding"/>
    <property type="evidence" value="ECO:0007669"/>
    <property type="project" value="TreeGrafter"/>
</dbReference>
<dbReference type="GO" id="GO:0042254">
    <property type="term" value="P:ribosome biogenesis"/>
    <property type="evidence" value="ECO:0007669"/>
    <property type="project" value="UniProtKB-KW"/>
</dbReference>
<dbReference type="CDD" id="cd01894">
    <property type="entry name" value="EngA1"/>
    <property type="match status" value="1"/>
</dbReference>
<dbReference type="CDD" id="cd01895">
    <property type="entry name" value="EngA2"/>
    <property type="match status" value="1"/>
</dbReference>
<dbReference type="FunFam" id="3.40.50.300:FF:000040">
    <property type="entry name" value="GTPase Der"/>
    <property type="match status" value="1"/>
</dbReference>
<dbReference type="FunFam" id="3.40.50.300:FF:000057">
    <property type="entry name" value="GTPase Der"/>
    <property type="match status" value="1"/>
</dbReference>
<dbReference type="Gene3D" id="3.30.300.20">
    <property type="match status" value="1"/>
</dbReference>
<dbReference type="Gene3D" id="3.40.50.300">
    <property type="entry name" value="P-loop containing nucleotide triphosphate hydrolases"/>
    <property type="match status" value="2"/>
</dbReference>
<dbReference type="HAMAP" id="MF_00195">
    <property type="entry name" value="GTPase_Der"/>
    <property type="match status" value="1"/>
</dbReference>
<dbReference type="InterPro" id="IPR031166">
    <property type="entry name" value="G_ENGA"/>
</dbReference>
<dbReference type="InterPro" id="IPR006073">
    <property type="entry name" value="GTP-bd"/>
</dbReference>
<dbReference type="InterPro" id="IPR016484">
    <property type="entry name" value="GTPase_Der"/>
</dbReference>
<dbReference type="InterPro" id="IPR032859">
    <property type="entry name" value="KH_dom-like"/>
</dbReference>
<dbReference type="InterPro" id="IPR015946">
    <property type="entry name" value="KH_dom-like_a/b"/>
</dbReference>
<dbReference type="InterPro" id="IPR027417">
    <property type="entry name" value="P-loop_NTPase"/>
</dbReference>
<dbReference type="InterPro" id="IPR005225">
    <property type="entry name" value="Small_GTP-bd"/>
</dbReference>
<dbReference type="NCBIfam" id="TIGR03594">
    <property type="entry name" value="GTPase_EngA"/>
    <property type="match status" value="1"/>
</dbReference>
<dbReference type="NCBIfam" id="TIGR00231">
    <property type="entry name" value="small_GTP"/>
    <property type="match status" value="2"/>
</dbReference>
<dbReference type="PANTHER" id="PTHR43834">
    <property type="entry name" value="GTPASE DER"/>
    <property type="match status" value="1"/>
</dbReference>
<dbReference type="PANTHER" id="PTHR43834:SF6">
    <property type="entry name" value="GTPASE DER"/>
    <property type="match status" value="1"/>
</dbReference>
<dbReference type="Pfam" id="PF14714">
    <property type="entry name" value="KH_dom-like"/>
    <property type="match status" value="1"/>
</dbReference>
<dbReference type="Pfam" id="PF01926">
    <property type="entry name" value="MMR_HSR1"/>
    <property type="match status" value="2"/>
</dbReference>
<dbReference type="PIRSF" id="PIRSF006485">
    <property type="entry name" value="GTP-binding_EngA"/>
    <property type="match status" value="1"/>
</dbReference>
<dbReference type="PRINTS" id="PR00326">
    <property type="entry name" value="GTP1OBG"/>
</dbReference>
<dbReference type="SUPFAM" id="SSF52540">
    <property type="entry name" value="P-loop containing nucleoside triphosphate hydrolases"/>
    <property type="match status" value="2"/>
</dbReference>
<dbReference type="PROSITE" id="PS51712">
    <property type="entry name" value="G_ENGA"/>
    <property type="match status" value="2"/>
</dbReference>
<comment type="function">
    <text evidence="1">GTPase that plays an essential role in the late steps of ribosome biogenesis.</text>
</comment>
<comment type="subunit">
    <text evidence="1">Associates with the 50S ribosomal subunit.</text>
</comment>
<comment type="similarity">
    <text evidence="1">Belongs to the TRAFAC class TrmE-Era-EngA-EngB-Septin-like GTPase superfamily. EngA (Der) GTPase family.</text>
</comment>
<protein>
    <recommendedName>
        <fullName evidence="1">GTPase Der</fullName>
    </recommendedName>
    <alternativeName>
        <fullName evidence="1">GTP-binding protein EngA</fullName>
    </alternativeName>
</protein>
<evidence type="ECO:0000255" key="1">
    <source>
        <dbReference type="HAMAP-Rule" id="MF_00195"/>
    </source>
</evidence>